<dbReference type="EC" id="2.7.7.6" evidence="1"/>
<dbReference type="EMBL" id="AE000782">
    <property type="protein sequence ID" value="AAB90119.1"/>
    <property type="molecule type" value="Genomic_DNA"/>
</dbReference>
<dbReference type="PIR" id="B69391">
    <property type="entry name" value="B69391"/>
</dbReference>
<dbReference type="RefSeq" id="WP_010878627.1">
    <property type="nucleotide sequence ID" value="NC_000917.1"/>
</dbReference>
<dbReference type="SMR" id="O29134"/>
<dbReference type="STRING" id="224325.AF_1131"/>
<dbReference type="PaxDb" id="224325-AF_1131"/>
<dbReference type="EnsemblBacteria" id="AAB90119">
    <property type="protein sequence ID" value="AAB90119"/>
    <property type="gene ID" value="AF_1131"/>
</dbReference>
<dbReference type="KEGG" id="afu:AF_1131"/>
<dbReference type="eggNOG" id="arCOG01268">
    <property type="taxonomic scope" value="Archaea"/>
</dbReference>
<dbReference type="HOGENOM" id="CLU_112527_5_0_2"/>
<dbReference type="OrthoDB" id="10567at2157"/>
<dbReference type="PhylomeDB" id="O29134"/>
<dbReference type="Proteomes" id="UP000002199">
    <property type="component" value="Chromosome"/>
</dbReference>
<dbReference type="GO" id="GO:0005737">
    <property type="term" value="C:cytoplasm"/>
    <property type="evidence" value="ECO:0007669"/>
    <property type="project" value="UniProtKB-SubCell"/>
</dbReference>
<dbReference type="GO" id="GO:0000428">
    <property type="term" value="C:DNA-directed RNA polymerase complex"/>
    <property type="evidence" value="ECO:0007669"/>
    <property type="project" value="UniProtKB-KW"/>
</dbReference>
<dbReference type="GO" id="GO:0003677">
    <property type="term" value="F:DNA binding"/>
    <property type="evidence" value="ECO:0007669"/>
    <property type="project" value="UniProtKB-UniRule"/>
</dbReference>
<dbReference type="GO" id="GO:0003899">
    <property type="term" value="F:DNA-directed RNA polymerase activity"/>
    <property type="evidence" value="ECO:0007669"/>
    <property type="project" value="UniProtKB-UniRule"/>
</dbReference>
<dbReference type="GO" id="GO:0006360">
    <property type="term" value="P:transcription by RNA polymerase I"/>
    <property type="evidence" value="ECO:0007669"/>
    <property type="project" value="TreeGrafter"/>
</dbReference>
<dbReference type="GO" id="GO:0006366">
    <property type="term" value="P:transcription by RNA polymerase II"/>
    <property type="evidence" value="ECO:0007669"/>
    <property type="project" value="TreeGrafter"/>
</dbReference>
<dbReference type="GO" id="GO:0042797">
    <property type="term" value="P:tRNA transcription by RNA polymerase III"/>
    <property type="evidence" value="ECO:0007669"/>
    <property type="project" value="TreeGrafter"/>
</dbReference>
<dbReference type="Gene3D" id="3.90.940.10">
    <property type="match status" value="1"/>
</dbReference>
<dbReference type="HAMAP" id="MF_00192">
    <property type="entry name" value="RNApol_arch_Rpo6"/>
    <property type="match status" value="1"/>
</dbReference>
<dbReference type="InterPro" id="IPR020708">
    <property type="entry name" value="DNA-dir_RNA_polK_14-18kDa_CS"/>
</dbReference>
<dbReference type="InterPro" id="IPR006110">
    <property type="entry name" value="Pol_omega/Rpo6/RPB6"/>
</dbReference>
<dbReference type="InterPro" id="IPR036161">
    <property type="entry name" value="RPB6/omega-like_sf"/>
</dbReference>
<dbReference type="InterPro" id="IPR006111">
    <property type="entry name" value="Rpo6/Rpb6"/>
</dbReference>
<dbReference type="NCBIfam" id="NF002208">
    <property type="entry name" value="PRK01099.1-3"/>
    <property type="match status" value="1"/>
</dbReference>
<dbReference type="PANTHER" id="PTHR47227">
    <property type="entry name" value="DNA-DIRECTED RNA POLYMERASE SUBUNIT K"/>
    <property type="match status" value="1"/>
</dbReference>
<dbReference type="PANTHER" id="PTHR47227:SF5">
    <property type="entry name" value="DNA-DIRECTED RNA POLYMERASES I, II, AND III SUBUNIT RPABC2"/>
    <property type="match status" value="1"/>
</dbReference>
<dbReference type="Pfam" id="PF01192">
    <property type="entry name" value="RNA_pol_Rpb6"/>
    <property type="match status" value="1"/>
</dbReference>
<dbReference type="SMART" id="SM01409">
    <property type="entry name" value="RNA_pol_Rpb6"/>
    <property type="match status" value="1"/>
</dbReference>
<dbReference type="SUPFAM" id="SSF63562">
    <property type="entry name" value="RPB6/omega subunit-like"/>
    <property type="match status" value="1"/>
</dbReference>
<dbReference type="PROSITE" id="PS01111">
    <property type="entry name" value="RNA_POL_K_14KD"/>
    <property type="match status" value="1"/>
</dbReference>
<name>RPO6_ARCFU</name>
<organism>
    <name type="scientific">Archaeoglobus fulgidus (strain ATCC 49558 / DSM 4304 / JCM 9628 / NBRC 100126 / VC-16)</name>
    <dbReference type="NCBI Taxonomy" id="224325"/>
    <lineage>
        <taxon>Archaea</taxon>
        <taxon>Methanobacteriati</taxon>
        <taxon>Methanobacteriota</taxon>
        <taxon>Archaeoglobi</taxon>
        <taxon>Archaeoglobales</taxon>
        <taxon>Archaeoglobaceae</taxon>
        <taxon>Archaeoglobus</taxon>
    </lineage>
</organism>
<sequence>MGIKVKFPFEYTRFEKARIIGARALQIAMGAPVLIETDKTEPLEIALEEFNRGVIPITVRRRRNEFVWLERYDLF</sequence>
<evidence type="ECO:0000255" key="1">
    <source>
        <dbReference type="HAMAP-Rule" id="MF_00192"/>
    </source>
</evidence>
<comment type="function">
    <text evidence="1">DNA-dependent RNA polymerase (RNAP) catalyzes the transcription of DNA into RNA using the four ribonucleoside triphosphates as substrates.</text>
</comment>
<comment type="catalytic activity">
    <reaction evidence="1">
        <text>RNA(n) + a ribonucleoside 5'-triphosphate = RNA(n+1) + diphosphate</text>
        <dbReference type="Rhea" id="RHEA:21248"/>
        <dbReference type="Rhea" id="RHEA-COMP:14527"/>
        <dbReference type="Rhea" id="RHEA-COMP:17342"/>
        <dbReference type="ChEBI" id="CHEBI:33019"/>
        <dbReference type="ChEBI" id="CHEBI:61557"/>
        <dbReference type="ChEBI" id="CHEBI:140395"/>
        <dbReference type="EC" id="2.7.7.6"/>
    </reaction>
</comment>
<comment type="subunit">
    <text evidence="1">Part of the RNA polymerase complex.</text>
</comment>
<comment type="subcellular location">
    <subcellularLocation>
        <location evidence="1">Cytoplasm</location>
    </subcellularLocation>
</comment>
<comment type="similarity">
    <text evidence="1">Belongs to the archaeal Rpo6/eukaryotic RPB6 RNA polymerase subunit family.</text>
</comment>
<reference key="1">
    <citation type="journal article" date="1997" name="Nature">
        <title>The complete genome sequence of the hyperthermophilic, sulphate-reducing archaeon Archaeoglobus fulgidus.</title>
        <authorList>
            <person name="Klenk H.-P."/>
            <person name="Clayton R.A."/>
            <person name="Tomb J.-F."/>
            <person name="White O."/>
            <person name="Nelson K.E."/>
            <person name="Ketchum K.A."/>
            <person name="Dodson R.J."/>
            <person name="Gwinn M.L."/>
            <person name="Hickey E.K."/>
            <person name="Peterson J.D."/>
            <person name="Richardson D.L."/>
            <person name="Kerlavage A.R."/>
            <person name="Graham D.E."/>
            <person name="Kyrpides N.C."/>
            <person name="Fleischmann R.D."/>
            <person name="Quackenbush J."/>
            <person name="Lee N.H."/>
            <person name="Sutton G.G."/>
            <person name="Gill S.R."/>
            <person name="Kirkness E.F."/>
            <person name="Dougherty B.A."/>
            <person name="McKenney K."/>
            <person name="Adams M.D."/>
            <person name="Loftus B.J."/>
            <person name="Peterson S.N."/>
            <person name="Reich C.I."/>
            <person name="McNeil L.K."/>
            <person name="Badger J.H."/>
            <person name="Glodek A."/>
            <person name="Zhou L."/>
            <person name="Overbeek R."/>
            <person name="Gocayne J.D."/>
            <person name="Weidman J.F."/>
            <person name="McDonald L.A."/>
            <person name="Utterback T.R."/>
            <person name="Cotton M.D."/>
            <person name="Spriggs T."/>
            <person name="Artiach P."/>
            <person name="Kaine B.P."/>
            <person name="Sykes S.M."/>
            <person name="Sadow P.W."/>
            <person name="D'Andrea K.P."/>
            <person name="Bowman C."/>
            <person name="Fujii C."/>
            <person name="Garland S.A."/>
            <person name="Mason T.M."/>
            <person name="Olsen G.J."/>
            <person name="Fraser C.M."/>
            <person name="Smith H.O."/>
            <person name="Woese C.R."/>
            <person name="Venter J.C."/>
        </authorList>
    </citation>
    <scope>NUCLEOTIDE SEQUENCE [LARGE SCALE GENOMIC DNA]</scope>
    <source>
        <strain>ATCC 49558 / DSM 4304 / JCM 9628 / NBRC 100126 / VC-16</strain>
    </source>
</reference>
<feature type="chain" id="PRO_0000133809" description="DNA-directed RNA polymerase subunit Rpo6">
    <location>
        <begin position="1"/>
        <end position="75"/>
    </location>
</feature>
<protein>
    <recommendedName>
        <fullName evidence="1">DNA-directed RNA polymerase subunit Rpo6</fullName>
        <ecNumber evidence="1">2.7.7.6</ecNumber>
    </recommendedName>
    <alternativeName>
        <fullName evidence="1">DNA-directed RNA polymerase subunit K</fullName>
    </alternativeName>
</protein>
<proteinExistence type="inferred from homology"/>
<gene>
    <name evidence="1" type="primary">rpo6</name>
    <name evidence="1" type="synonym">rpoK</name>
    <name type="ordered locus">AF_1131</name>
</gene>
<keyword id="KW-0963">Cytoplasm</keyword>
<keyword id="KW-0240">DNA-directed RNA polymerase</keyword>
<keyword id="KW-0548">Nucleotidyltransferase</keyword>
<keyword id="KW-1185">Reference proteome</keyword>
<keyword id="KW-0804">Transcription</keyword>
<keyword id="KW-0808">Transferase</keyword>
<accession>O29134</accession>